<sequence>MQRLAKIISNAGICSRRDAEKLILEGQVKVDGITILSPATNVDISNQIEVSGILINQSQKPRLWIYYKPVGLITTHKDPLSRKTVFEQLTGLPRVISIGRLDLNSEGLLLLTNSGDLARQFELPSNRLKRVYHVRAYGKSDILLKSDYKNLEIDGIFYNPHSIKLFKQNKSNSWFEVVLFEGKNREIRRIFEYFGLKVNKLIRIQYGSFTIDNLKPGAYKEINNKILEK</sequence>
<comment type="catalytic activity">
    <reaction>
        <text>a uridine in RNA = a pseudouridine in RNA</text>
        <dbReference type="Rhea" id="RHEA:48348"/>
        <dbReference type="Rhea" id="RHEA-COMP:12068"/>
        <dbReference type="Rhea" id="RHEA-COMP:12069"/>
        <dbReference type="ChEBI" id="CHEBI:65314"/>
        <dbReference type="ChEBI" id="CHEBI:65315"/>
    </reaction>
</comment>
<comment type="similarity">
    <text evidence="3">Belongs to the pseudouridine synthase RsuA family.</text>
</comment>
<keyword id="KW-0413">Isomerase</keyword>
<keyword id="KW-0694">RNA-binding</keyword>
<protein>
    <recommendedName>
        <fullName>Uncharacterized RNA pseudouridine synthase RF_0863</fullName>
        <ecNumber>5.4.99.-</ecNumber>
    </recommendedName>
    <alternativeName>
        <fullName>RNA pseudouridylate synthase</fullName>
    </alternativeName>
    <alternativeName>
        <fullName>RNA-uridine isomerase</fullName>
    </alternativeName>
</protein>
<dbReference type="EC" id="5.4.99.-"/>
<dbReference type="EMBL" id="CP000053">
    <property type="protein sequence ID" value="AAY61714.1"/>
    <property type="molecule type" value="Genomic_DNA"/>
</dbReference>
<dbReference type="SMR" id="Q4UL59"/>
<dbReference type="STRING" id="315456.RF_0863"/>
<dbReference type="KEGG" id="rfe:RF_0863"/>
<dbReference type="eggNOG" id="COG1187">
    <property type="taxonomic scope" value="Bacteria"/>
</dbReference>
<dbReference type="HOGENOM" id="CLU_024979_1_0_5"/>
<dbReference type="OrthoDB" id="9807213at2"/>
<dbReference type="Proteomes" id="UP000008548">
    <property type="component" value="Chromosome"/>
</dbReference>
<dbReference type="GO" id="GO:0003723">
    <property type="term" value="F:RNA binding"/>
    <property type="evidence" value="ECO:0007669"/>
    <property type="project" value="UniProtKB-KW"/>
</dbReference>
<dbReference type="GO" id="GO:0120159">
    <property type="term" value="F:rRNA pseudouridine synthase activity"/>
    <property type="evidence" value="ECO:0007669"/>
    <property type="project" value="UniProtKB-ARBA"/>
</dbReference>
<dbReference type="GO" id="GO:0000455">
    <property type="term" value="P:enzyme-directed rRNA pseudouridine synthesis"/>
    <property type="evidence" value="ECO:0007669"/>
    <property type="project" value="UniProtKB-ARBA"/>
</dbReference>
<dbReference type="CDD" id="cd00165">
    <property type="entry name" value="S4"/>
    <property type="match status" value="1"/>
</dbReference>
<dbReference type="FunFam" id="3.10.290.10:FF:000003">
    <property type="entry name" value="Pseudouridine synthase"/>
    <property type="match status" value="1"/>
</dbReference>
<dbReference type="Gene3D" id="3.30.70.1560">
    <property type="entry name" value="Alpha-L RNA-binding motif"/>
    <property type="match status" value="1"/>
</dbReference>
<dbReference type="Gene3D" id="3.30.70.580">
    <property type="entry name" value="Pseudouridine synthase I, catalytic domain, N-terminal subdomain"/>
    <property type="match status" value="1"/>
</dbReference>
<dbReference type="Gene3D" id="3.10.290.10">
    <property type="entry name" value="RNA-binding S4 domain"/>
    <property type="match status" value="1"/>
</dbReference>
<dbReference type="InterPro" id="IPR042092">
    <property type="entry name" value="PsdUridine_s_RsuA/RluB/E/F_cat"/>
</dbReference>
<dbReference type="InterPro" id="IPR020103">
    <property type="entry name" value="PsdUridine_synth_cat_dom_sf"/>
</dbReference>
<dbReference type="InterPro" id="IPR006145">
    <property type="entry name" value="PsdUridine_synth_RsuA/RluA"/>
</dbReference>
<dbReference type="InterPro" id="IPR000748">
    <property type="entry name" value="PsdUridine_synth_RsuA/RluB/E/F"/>
</dbReference>
<dbReference type="InterPro" id="IPR018496">
    <property type="entry name" value="PsdUridine_synth_RsuA/RluB_CS"/>
</dbReference>
<dbReference type="InterPro" id="IPR050343">
    <property type="entry name" value="RsuA_PseudoU_synthase"/>
</dbReference>
<dbReference type="InterPro" id="IPR002942">
    <property type="entry name" value="S4_RNA-bd"/>
</dbReference>
<dbReference type="InterPro" id="IPR036986">
    <property type="entry name" value="S4_RNA-bd_sf"/>
</dbReference>
<dbReference type="InterPro" id="IPR020094">
    <property type="entry name" value="TruA/RsuA/RluB/E/F_N"/>
</dbReference>
<dbReference type="NCBIfam" id="TIGR00093">
    <property type="entry name" value="pseudouridine synthase"/>
    <property type="match status" value="1"/>
</dbReference>
<dbReference type="PANTHER" id="PTHR47683">
    <property type="entry name" value="PSEUDOURIDINE SYNTHASE FAMILY PROTEIN-RELATED"/>
    <property type="match status" value="1"/>
</dbReference>
<dbReference type="PANTHER" id="PTHR47683:SF3">
    <property type="entry name" value="RIBOSOMAL LARGE SUBUNIT PSEUDOURIDINE SYNTHASE B"/>
    <property type="match status" value="1"/>
</dbReference>
<dbReference type="Pfam" id="PF00849">
    <property type="entry name" value="PseudoU_synth_2"/>
    <property type="match status" value="1"/>
</dbReference>
<dbReference type="Pfam" id="PF01479">
    <property type="entry name" value="S4"/>
    <property type="match status" value="1"/>
</dbReference>
<dbReference type="SMART" id="SM00363">
    <property type="entry name" value="S4"/>
    <property type="match status" value="1"/>
</dbReference>
<dbReference type="SUPFAM" id="SSF55174">
    <property type="entry name" value="Alpha-L RNA-binding motif"/>
    <property type="match status" value="1"/>
</dbReference>
<dbReference type="SUPFAM" id="SSF55120">
    <property type="entry name" value="Pseudouridine synthase"/>
    <property type="match status" value="1"/>
</dbReference>
<dbReference type="PROSITE" id="PS01149">
    <property type="entry name" value="PSI_RSU"/>
    <property type="match status" value="1"/>
</dbReference>
<dbReference type="PROSITE" id="PS50889">
    <property type="entry name" value="S4"/>
    <property type="match status" value="1"/>
</dbReference>
<feature type="chain" id="PRO_0000294476" description="Uncharacterized RNA pseudouridine synthase RF_0863">
    <location>
        <begin position="1"/>
        <end position="229"/>
    </location>
</feature>
<feature type="domain" description="S4 RNA-binding" evidence="2">
    <location>
        <begin position="2"/>
        <end position="69"/>
    </location>
</feature>
<feature type="active site" description="Nucleophile" evidence="1">
    <location>
        <position position="102"/>
    </location>
</feature>
<evidence type="ECO:0000250" key="1"/>
<evidence type="ECO:0000255" key="2">
    <source>
        <dbReference type="PROSITE-ProRule" id="PRU00182"/>
    </source>
</evidence>
<evidence type="ECO:0000305" key="3"/>
<gene>
    <name type="ordered locus">RF_0863</name>
</gene>
<reference key="1">
    <citation type="journal article" date="2005" name="PLoS Biol.">
        <title>The genome sequence of Rickettsia felis identifies the first putative conjugative plasmid in an obligate intracellular parasite.</title>
        <authorList>
            <person name="Ogata H."/>
            <person name="Renesto P."/>
            <person name="Audic S."/>
            <person name="Robert C."/>
            <person name="Blanc G."/>
            <person name="Fournier P.-E."/>
            <person name="Parinello H."/>
            <person name="Claverie J.-M."/>
            <person name="Raoult D."/>
        </authorList>
    </citation>
    <scope>NUCLEOTIDE SEQUENCE [LARGE SCALE GENOMIC DNA]</scope>
    <source>
        <strain>ATCC VR-1525 / URRWXCal2</strain>
    </source>
</reference>
<proteinExistence type="inferred from homology"/>
<accession>Q4UL59</accession>
<organism>
    <name type="scientific">Rickettsia felis (strain ATCC VR-1525 / URRWXCal2)</name>
    <name type="common">Rickettsia azadi</name>
    <dbReference type="NCBI Taxonomy" id="315456"/>
    <lineage>
        <taxon>Bacteria</taxon>
        <taxon>Pseudomonadati</taxon>
        <taxon>Pseudomonadota</taxon>
        <taxon>Alphaproteobacteria</taxon>
        <taxon>Rickettsiales</taxon>
        <taxon>Rickettsiaceae</taxon>
        <taxon>Rickettsieae</taxon>
        <taxon>Rickettsia</taxon>
        <taxon>spotted fever group</taxon>
    </lineage>
</organism>
<name>Y544_RICFE</name>